<reference key="1">
    <citation type="journal article" date="2003" name="Proc. Natl. Acad. Sci. U.S.A.">
        <title>The complete genome sequence of Mycobacterium bovis.</title>
        <authorList>
            <person name="Garnier T."/>
            <person name="Eiglmeier K."/>
            <person name="Camus J.-C."/>
            <person name="Medina N."/>
            <person name="Mansoor H."/>
            <person name="Pryor M."/>
            <person name="Duthoy S."/>
            <person name="Grondin S."/>
            <person name="Lacroix C."/>
            <person name="Monsempe C."/>
            <person name="Simon S."/>
            <person name="Harris B."/>
            <person name="Atkin R."/>
            <person name="Doggett J."/>
            <person name="Mayes R."/>
            <person name="Keating L."/>
            <person name="Wheeler P.R."/>
            <person name="Parkhill J."/>
            <person name="Barrell B.G."/>
            <person name="Cole S.T."/>
            <person name="Gordon S.V."/>
            <person name="Hewinson R.G."/>
        </authorList>
    </citation>
    <scope>NUCLEOTIDE SEQUENCE [LARGE SCALE GENOMIC DNA]</scope>
    <source>
        <strain>ATCC BAA-935 / AF2122/97</strain>
    </source>
</reference>
<reference key="2">
    <citation type="journal article" date="2017" name="Genome Announc.">
        <title>Updated reference genome sequence and annotation of Mycobacterium bovis AF2122/97.</title>
        <authorList>
            <person name="Malone K.M."/>
            <person name="Farrell D."/>
            <person name="Stuber T.P."/>
            <person name="Schubert O.T."/>
            <person name="Aebersold R."/>
            <person name="Robbe-Austerman S."/>
            <person name="Gordon S.V."/>
        </authorList>
    </citation>
    <scope>NUCLEOTIDE SEQUENCE [LARGE SCALE GENOMIC DNA]</scope>
    <scope>GENOME REANNOTATION</scope>
    <source>
        <strain>ATCC BAA-935 / AF2122/97</strain>
    </source>
</reference>
<organism>
    <name type="scientific">Mycobacterium bovis (strain ATCC BAA-935 / AF2122/97)</name>
    <dbReference type="NCBI Taxonomy" id="233413"/>
    <lineage>
        <taxon>Bacteria</taxon>
        <taxon>Bacillati</taxon>
        <taxon>Actinomycetota</taxon>
        <taxon>Actinomycetes</taxon>
        <taxon>Mycobacteriales</taxon>
        <taxon>Mycobacteriaceae</taxon>
        <taxon>Mycobacterium</taxon>
        <taxon>Mycobacterium tuberculosis complex</taxon>
    </lineage>
</organism>
<proteinExistence type="inferred from homology"/>
<protein>
    <recommendedName>
        <fullName>Homoserine dehydrogenase</fullName>
        <shortName>HDH</shortName>
        <shortName>HSD</shortName>
        <ecNumber evidence="3">1.1.1.3</ecNumber>
    </recommendedName>
</protein>
<name>DHOM_MYCBO</name>
<keyword id="KW-0028">Amino-acid biosynthesis</keyword>
<keyword id="KW-0479">Metal-binding</keyword>
<keyword id="KW-0486">Methionine biosynthesis</keyword>
<keyword id="KW-0520">NAD</keyword>
<keyword id="KW-0521">NADP</keyword>
<keyword id="KW-0560">Oxidoreductase</keyword>
<keyword id="KW-1185">Reference proteome</keyword>
<keyword id="KW-0915">Sodium</keyword>
<keyword id="KW-0791">Threonine biosynthesis</keyword>
<accession>P63630</accession>
<accession>A0A1R3XXY9</accession>
<accession>Q10601</accession>
<accession>X2BHN7</accession>
<evidence type="ECO:0000250" key="1">
    <source>
        <dbReference type="UniProtKB" id="F9VNG5"/>
    </source>
</evidence>
<evidence type="ECO:0000250" key="2">
    <source>
        <dbReference type="UniProtKB" id="O58802"/>
    </source>
</evidence>
<evidence type="ECO:0000250" key="3">
    <source>
        <dbReference type="UniProtKB" id="P31116"/>
    </source>
</evidence>
<evidence type="ECO:0000255" key="4"/>
<evidence type="ECO:0000255" key="5">
    <source>
        <dbReference type="PROSITE-ProRule" id="PRU01007"/>
    </source>
</evidence>
<evidence type="ECO:0000305" key="6"/>
<gene>
    <name type="primary">hom</name>
    <name type="synonym">thrA</name>
    <name type="ordered locus">BQ2027_MB1326</name>
</gene>
<comment type="function">
    <text evidence="3">Catalyzes the conversion of L-aspartate-beta-semialdehyde (L-Asa) to L-homoserine (L-Hse), the third step in the biosynthesis of threonine and methionine from aspartate.</text>
</comment>
<comment type="catalytic activity">
    <reaction evidence="3">
        <text>L-homoserine + NADP(+) = L-aspartate 4-semialdehyde + NADPH + H(+)</text>
        <dbReference type="Rhea" id="RHEA:15761"/>
        <dbReference type="ChEBI" id="CHEBI:15378"/>
        <dbReference type="ChEBI" id="CHEBI:57476"/>
        <dbReference type="ChEBI" id="CHEBI:57783"/>
        <dbReference type="ChEBI" id="CHEBI:58349"/>
        <dbReference type="ChEBI" id="CHEBI:537519"/>
        <dbReference type="EC" id="1.1.1.3"/>
    </reaction>
    <physiologicalReaction direction="right-to-left" evidence="3">
        <dbReference type="Rhea" id="RHEA:15763"/>
    </physiologicalReaction>
</comment>
<comment type="catalytic activity">
    <reaction evidence="3">
        <text>L-homoserine + NAD(+) = L-aspartate 4-semialdehyde + NADH + H(+)</text>
        <dbReference type="Rhea" id="RHEA:15757"/>
        <dbReference type="ChEBI" id="CHEBI:15378"/>
        <dbReference type="ChEBI" id="CHEBI:57476"/>
        <dbReference type="ChEBI" id="CHEBI:57540"/>
        <dbReference type="ChEBI" id="CHEBI:57945"/>
        <dbReference type="ChEBI" id="CHEBI:537519"/>
        <dbReference type="EC" id="1.1.1.3"/>
    </reaction>
    <physiologicalReaction direction="right-to-left" evidence="3">
        <dbReference type="Rhea" id="RHEA:15759"/>
    </physiologicalReaction>
</comment>
<comment type="cofactor">
    <cofactor evidence="3">
        <name>a metal cation</name>
        <dbReference type="ChEBI" id="CHEBI:25213"/>
    </cofactor>
    <text evidence="3">A sodium ion is seen in the structure; a metal ion may subtly affect the relative position of the nucleotide-binding region to influence enzyme activity, and could increase the stability of the enzyme.</text>
</comment>
<comment type="pathway">
    <text evidence="3">Amino-acid biosynthesis; L-methionine biosynthesis via de novo pathway; L-homoserine from L-aspartate: step 3/3.</text>
</comment>
<comment type="pathway">
    <text evidence="3">Amino-acid biosynthesis; L-threonine biosynthesis; L-threonine from L-aspartate: step 3/5.</text>
</comment>
<comment type="similarity">
    <text evidence="6">Belongs to the homoserine dehydrogenase family.</text>
</comment>
<dbReference type="EC" id="1.1.1.3" evidence="3"/>
<dbReference type="EMBL" id="LT708304">
    <property type="protein sequence ID" value="SIT99929.1"/>
    <property type="molecule type" value="Genomic_DNA"/>
</dbReference>
<dbReference type="RefSeq" id="NP_854980.1">
    <property type="nucleotide sequence ID" value="NC_002945.3"/>
</dbReference>
<dbReference type="RefSeq" id="WP_003406648.1">
    <property type="nucleotide sequence ID" value="NC_002945.4"/>
</dbReference>
<dbReference type="SMR" id="P63630"/>
<dbReference type="KEGG" id="mbo:BQ2027_MB1326"/>
<dbReference type="PATRIC" id="fig|233413.5.peg.1452"/>
<dbReference type="UniPathway" id="UPA00050">
    <property type="reaction ID" value="UER00063"/>
</dbReference>
<dbReference type="UniPathway" id="UPA00051">
    <property type="reaction ID" value="UER00465"/>
</dbReference>
<dbReference type="Proteomes" id="UP000001419">
    <property type="component" value="Chromosome"/>
</dbReference>
<dbReference type="GO" id="GO:0004412">
    <property type="term" value="F:homoserine dehydrogenase activity"/>
    <property type="evidence" value="ECO:0000250"/>
    <property type="project" value="UniProtKB"/>
</dbReference>
<dbReference type="GO" id="GO:0046872">
    <property type="term" value="F:metal ion binding"/>
    <property type="evidence" value="ECO:0007669"/>
    <property type="project" value="UniProtKB-KW"/>
</dbReference>
<dbReference type="GO" id="GO:0070403">
    <property type="term" value="F:NAD+ binding"/>
    <property type="evidence" value="ECO:0000250"/>
    <property type="project" value="UniProtKB"/>
</dbReference>
<dbReference type="GO" id="GO:0050661">
    <property type="term" value="F:NADP binding"/>
    <property type="evidence" value="ECO:0007669"/>
    <property type="project" value="InterPro"/>
</dbReference>
<dbReference type="GO" id="GO:0009086">
    <property type="term" value="P:methionine biosynthetic process"/>
    <property type="evidence" value="ECO:0000250"/>
    <property type="project" value="UniProtKB"/>
</dbReference>
<dbReference type="GO" id="GO:0009088">
    <property type="term" value="P:threonine biosynthetic process"/>
    <property type="evidence" value="ECO:0000250"/>
    <property type="project" value="UniProtKB"/>
</dbReference>
<dbReference type="CDD" id="cd04881">
    <property type="entry name" value="ACT_HSDH-Hom"/>
    <property type="match status" value="1"/>
</dbReference>
<dbReference type="FunFam" id="3.30.360.10:FF:000005">
    <property type="entry name" value="Homoserine dehydrogenase"/>
    <property type="match status" value="1"/>
</dbReference>
<dbReference type="FunFam" id="3.40.50.720:FF:000062">
    <property type="entry name" value="Homoserine dehydrogenase"/>
    <property type="match status" value="1"/>
</dbReference>
<dbReference type="Gene3D" id="3.30.70.260">
    <property type="match status" value="1"/>
</dbReference>
<dbReference type="Gene3D" id="3.30.360.10">
    <property type="entry name" value="Dihydrodipicolinate Reductase, domain 2"/>
    <property type="match status" value="1"/>
</dbReference>
<dbReference type="Gene3D" id="3.40.50.720">
    <property type="entry name" value="NAD(P)-binding Rossmann-like Domain"/>
    <property type="match status" value="1"/>
</dbReference>
<dbReference type="InterPro" id="IPR045865">
    <property type="entry name" value="ACT-like_dom_sf"/>
</dbReference>
<dbReference type="InterPro" id="IPR002912">
    <property type="entry name" value="ACT_dom"/>
</dbReference>
<dbReference type="InterPro" id="IPR005106">
    <property type="entry name" value="Asp/hSer_DH_NAD-bd"/>
</dbReference>
<dbReference type="InterPro" id="IPR016204">
    <property type="entry name" value="HDH"/>
</dbReference>
<dbReference type="InterPro" id="IPR001342">
    <property type="entry name" value="HDH_cat"/>
</dbReference>
<dbReference type="InterPro" id="IPR019811">
    <property type="entry name" value="HDH_CS"/>
</dbReference>
<dbReference type="InterPro" id="IPR036291">
    <property type="entry name" value="NAD(P)-bd_dom_sf"/>
</dbReference>
<dbReference type="NCBIfam" id="NF004976">
    <property type="entry name" value="PRK06349.1"/>
    <property type="match status" value="1"/>
</dbReference>
<dbReference type="PANTHER" id="PTHR43331">
    <property type="entry name" value="HOMOSERINE DEHYDROGENASE"/>
    <property type="match status" value="1"/>
</dbReference>
<dbReference type="PANTHER" id="PTHR43331:SF1">
    <property type="entry name" value="HOMOSERINE DEHYDROGENASE"/>
    <property type="match status" value="1"/>
</dbReference>
<dbReference type="Pfam" id="PF01842">
    <property type="entry name" value="ACT"/>
    <property type="match status" value="1"/>
</dbReference>
<dbReference type="Pfam" id="PF00742">
    <property type="entry name" value="Homoserine_dh"/>
    <property type="match status" value="1"/>
</dbReference>
<dbReference type="Pfam" id="PF03447">
    <property type="entry name" value="NAD_binding_3"/>
    <property type="match status" value="1"/>
</dbReference>
<dbReference type="PIRSF" id="PIRSF000098">
    <property type="entry name" value="Homoser_dehydrog"/>
    <property type="match status" value="1"/>
</dbReference>
<dbReference type="SUPFAM" id="SSF55021">
    <property type="entry name" value="ACT-like"/>
    <property type="match status" value="1"/>
</dbReference>
<dbReference type="SUPFAM" id="SSF55347">
    <property type="entry name" value="Glyceraldehyde-3-phosphate dehydrogenase-like, C-terminal domain"/>
    <property type="match status" value="1"/>
</dbReference>
<dbReference type="SUPFAM" id="SSF51735">
    <property type="entry name" value="NAD(P)-binding Rossmann-fold domains"/>
    <property type="match status" value="1"/>
</dbReference>
<dbReference type="PROSITE" id="PS51671">
    <property type="entry name" value="ACT"/>
    <property type="match status" value="1"/>
</dbReference>
<dbReference type="PROSITE" id="PS01042">
    <property type="entry name" value="HOMOSER_DHGENASE"/>
    <property type="match status" value="1"/>
</dbReference>
<feature type="chain" id="PRO_0000066700" description="Homoserine dehydrogenase">
    <location>
        <begin position="1"/>
        <end position="441"/>
    </location>
</feature>
<feature type="domain" description="ACT" evidence="5">
    <location>
        <begin position="356"/>
        <end position="435"/>
    </location>
</feature>
<feature type="active site" description="Proton donor" evidence="4">
    <location>
        <position position="207"/>
    </location>
</feature>
<feature type="binding site" evidence="1">
    <location>
        <position position="17"/>
    </location>
    <ligand>
        <name>NADP(+)</name>
        <dbReference type="ChEBI" id="CHEBI:58349"/>
    </ligand>
</feature>
<feature type="binding site" evidence="3">
    <location>
        <position position="18"/>
    </location>
    <ligand>
        <name>NAD(+)</name>
        <dbReference type="ChEBI" id="CHEBI:57540"/>
    </ligand>
</feature>
<feature type="binding site" evidence="1">
    <location>
        <position position="18"/>
    </location>
    <ligand>
        <name>NADP(+)</name>
        <dbReference type="ChEBI" id="CHEBI:58349"/>
    </ligand>
</feature>
<feature type="binding site" evidence="2">
    <location>
        <position position="18"/>
    </location>
    <ligand>
        <name>NADPH</name>
        <dbReference type="ChEBI" id="CHEBI:57783"/>
    </ligand>
</feature>
<feature type="binding site" evidence="3">
    <location>
        <position position="37"/>
    </location>
    <ligand>
        <name>NAD(+)</name>
        <dbReference type="ChEBI" id="CHEBI:57540"/>
    </ligand>
</feature>
<feature type="binding site" evidence="3">
    <location>
        <position position="47"/>
    </location>
    <ligand>
        <name>NAD(+)</name>
        <dbReference type="ChEBI" id="CHEBI:57540"/>
    </ligand>
</feature>
<feature type="binding site" evidence="1">
    <location>
        <position position="49"/>
    </location>
    <ligand>
        <name>NADP(+)</name>
        <dbReference type="ChEBI" id="CHEBI:58349"/>
    </ligand>
</feature>
<feature type="binding site" evidence="2">
    <location>
        <position position="49"/>
    </location>
    <ligand>
        <name>NADPH</name>
        <dbReference type="ChEBI" id="CHEBI:57783"/>
    </ligand>
</feature>
<feature type="binding site" evidence="1">
    <location>
        <position position="50"/>
    </location>
    <ligand>
        <name>NADP(+)</name>
        <dbReference type="ChEBI" id="CHEBI:58349"/>
    </ligand>
</feature>
<feature type="binding site" evidence="1">
    <location>
        <position position="107"/>
    </location>
    <ligand>
        <name>NADP(+)</name>
        <dbReference type="ChEBI" id="CHEBI:58349"/>
    </ligand>
</feature>
<feature type="binding site" evidence="2">
    <location>
        <position position="107"/>
    </location>
    <ligand>
        <name>NADPH</name>
        <dbReference type="ChEBI" id="CHEBI:57783"/>
    </ligand>
</feature>
<feature type="binding site" evidence="3">
    <location>
        <position position="131"/>
    </location>
    <ligand>
        <name>Na(+)</name>
        <dbReference type="ChEBI" id="CHEBI:29101"/>
    </ligand>
</feature>
<feature type="binding site" evidence="3">
    <location>
        <position position="134"/>
    </location>
    <ligand>
        <name>Na(+)</name>
        <dbReference type="ChEBI" id="CHEBI:29101"/>
    </ligand>
</feature>
<feature type="binding site" evidence="3">
    <location>
        <position position="136"/>
    </location>
    <ligand>
        <name>Na(+)</name>
        <dbReference type="ChEBI" id="CHEBI:29101"/>
    </ligand>
</feature>
<feature type="binding site" evidence="3">
    <location>
        <position position="138"/>
    </location>
    <ligand>
        <name>Na(+)</name>
        <dbReference type="ChEBI" id="CHEBI:29101"/>
    </ligand>
</feature>
<feature type="binding site" evidence="1">
    <location>
        <position position="189"/>
    </location>
    <ligand>
        <name>NADP(+)</name>
        <dbReference type="ChEBI" id="CHEBI:58349"/>
    </ligand>
</feature>
<feature type="binding site" evidence="3">
    <location>
        <position position="192"/>
    </location>
    <ligand>
        <name>L-homoserine</name>
        <dbReference type="ChEBI" id="CHEBI:57476"/>
    </ligand>
</feature>
<feature type="binding site" evidence="1">
    <location>
        <position position="192"/>
    </location>
    <ligand>
        <name>NADP(+)</name>
        <dbReference type="ChEBI" id="CHEBI:58349"/>
    </ligand>
</feature>
<feature type="binding site" evidence="3">
    <location>
        <position position="203"/>
    </location>
    <ligand>
        <name>L-homoserine</name>
        <dbReference type="ChEBI" id="CHEBI:57476"/>
    </ligand>
</feature>
<feature type="binding site" evidence="3">
    <location>
        <position position="309"/>
    </location>
    <ligand>
        <name>NAD(+)</name>
        <dbReference type="ChEBI" id="CHEBI:57540"/>
    </ligand>
</feature>
<feature type="binding site" evidence="1">
    <location>
        <position position="309"/>
    </location>
    <ligand>
        <name>NADP(+)</name>
        <dbReference type="ChEBI" id="CHEBI:58349"/>
    </ligand>
</feature>
<feature type="binding site" evidence="2">
    <location>
        <position position="309"/>
    </location>
    <ligand>
        <name>NADPH</name>
        <dbReference type="ChEBI" id="CHEBI:57783"/>
    </ligand>
</feature>
<sequence>MPGDEKPVGVAVLGLGNVGSEVVRIIENSAEDLAARVGAPLVLRGIGVRRVTTDRGVPIELLTDDIEELVAREDVDIVVEVMGPVEPSRKAILGALERGKSVVTANKALLATSTGELAQAAESAHVDLYFEAAVAGAIPVIRPLTQSLAGDTVLRVAGIVNGTTNYILSAMDSTGADYASALADASALGYAEADPTADVEGYDAAAKAAILASIAFHTRVTADDVYREGITKVTPADFGSAHALGCTIKLLSICERITTDEGSQRVSARVYPALVPLSHPLAAVNGAFNAVVVEAEAAGRLMFYGQGAGGAPTASAVTGDLVMAARNRVLGSRGPRESKYAQLPVAPMGFIETRYYVSMNVADKPGVLSAVAAEFAKREVSIAEVRQEGVVDEGGRRVGARIVVVTHLATDAALSETVDALDDLDVVQGVSSVIRLEGTGL</sequence>